<protein>
    <recommendedName>
        <fullName evidence="1">Phenylalanine--tRNA ligase alpha subunit</fullName>
        <ecNumber evidence="1">6.1.1.20</ecNumber>
    </recommendedName>
    <alternativeName>
        <fullName evidence="1">Phenylalanyl-tRNA synthetase alpha subunit</fullName>
        <shortName evidence="1">PheRS</shortName>
    </alternativeName>
</protein>
<comment type="catalytic activity">
    <reaction evidence="1">
        <text>tRNA(Phe) + L-phenylalanine + ATP = L-phenylalanyl-tRNA(Phe) + AMP + diphosphate + H(+)</text>
        <dbReference type="Rhea" id="RHEA:19413"/>
        <dbReference type="Rhea" id="RHEA-COMP:9668"/>
        <dbReference type="Rhea" id="RHEA-COMP:9699"/>
        <dbReference type="ChEBI" id="CHEBI:15378"/>
        <dbReference type="ChEBI" id="CHEBI:30616"/>
        <dbReference type="ChEBI" id="CHEBI:33019"/>
        <dbReference type="ChEBI" id="CHEBI:58095"/>
        <dbReference type="ChEBI" id="CHEBI:78442"/>
        <dbReference type="ChEBI" id="CHEBI:78531"/>
        <dbReference type="ChEBI" id="CHEBI:456215"/>
        <dbReference type="EC" id="6.1.1.20"/>
    </reaction>
</comment>
<comment type="cofactor">
    <cofactor evidence="1">
        <name>Mg(2+)</name>
        <dbReference type="ChEBI" id="CHEBI:18420"/>
    </cofactor>
    <text evidence="1">Binds 2 magnesium ions per tetramer.</text>
</comment>
<comment type="subunit">
    <text evidence="1">Tetramer of two alpha and two beta subunits.</text>
</comment>
<comment type="subcellular location">
    <subcellularLocation>
        <location evidence="1">Cytoplasm</location>
    </subcellularLocation>
</comment>
<comment type="similarity">
    <text evidence="1">Belongs to the class-II aminoacyl-tRNA synthetase family. Phe-tRNA synthetase alpha subunit type 2 subfamily.</text>
</comment>
<accession>Q9Y9I6</accession>
<proteinExistence type="inferred from homology"/>
<gene>
    <name evidence="1" type="primary">pheS</name>
    <name type="ordered locus">APE_2302.1</name>
</gene>
<reference key="1">
    <citation type="journal article" date="1999" name="DNA Res.">
        <title>Complete genome sequence of an aerobic hyper-thermophilic crenarchaeon, Aeropyrum pernix K1.</title>
        <authorList>
            <person name="Kawarabayasi Y."/>
            <person name="Hino Y."/>
            <person name="Horikawa H."/>
            <person name="Yamazaki S."/>
            <person name="Haikawa Y."/>
            <person name="Jin-no K."/>
            <person name="Takahashi M."/>
            <person name="Sekine M."/>
            <person name="Baba S."/>
            <person name="Ankai A."/>
            <person name="Kosugi H."/>
            <person name="Hosoyama A."/>
            <person name="Fukui S."/>
            <person name="Nagai Y."/>
            <person name="Nishijima K."/>
            <person name="Nakazawa H."/>
            <person name="Takamiya M."/>
            <person name="Masuda S."/>
            <person name="Funahashi T."/>
            <person name="Tanaka T."/>
            <person name="Kudoh Y."/>
            <person name="Yamazaki J."/>
            <person name="Kushida N."/>
            <person name="Oguchi A."/>
            <person name="Aoki K."/>
            <person name="Kubota K."/>
            <person name="Nakamura Y."/>
            <person name="Nomura N."/>
            <person name="Sako Y."/>
            <person name="Kikuchi H."/>
        </authorList>
    </citation>
    <scope>NUCLEOTIDE SEQUENCE [LARGE SCALE GENOMIC DNA]</scope>
    <source>
        <strain>ATCC 700893 / DSM 11879 / JCM 9820 / NBRC 100138 / K1</strain>
    </source>
</reference>
<dbReference type="EC" id="6.1.1.20" evidence="1"/>
<dbReference type="EMBL" id="BA000002">
    <property type="protein sequence ID" value="BAA81314.2"/>
    <property type="molecule type" value="Genomic_DNA"/>
</dbReference>
<dbReference type="PIR" id="B72457">
    <property type="entry name" value="B72457"/>
</dbReference>
<dbReference type="RefSeq" id="WP_010866925.1">
    <property type="nucleotide sequence ID" value="NC_000854.2"/>
</dbReference>
<dbReference type="SMR" id="Q9Y9I6"/>
<dbReference type="STRING" id="272557.APE_2302.1"/>
<dbReference type="EnsemblBacteria" id="BAA81314">
    <property type="protein sequence ID" value="BAA81314"/>
    <property type="gene ID" value="APE_2302.1"/>
</dbReference>
<dbReference type="GeneID" id="1445333"/>
<dbReference type="KEGG" id="ape:APE_2302.1"/>
<dbReference type="PATRIC" id="fig|272557.25.peg.1535"/>
<dbReference type="eggNOG" id="arCOG00410">
    <property type="taxonomic scope" value="Archaea"/>
</dbReference>
<dbReference type="BRENDA" id="6.1.1.20">
    <property type="organism ID" value="171"/>
</dbReference>
<dbReference type="Proteomes" id="UP000002518">
    <property type="component" value="Chromosome"/>
</dbReference>
<dbReference type="GO" id="GO:0005737">
    <property type="term" value="C:cytoplasm"/>
    <property type="evidence" value="ECO:0007669"/>
    <property type="project" value="UniProtKB-SubCell"/>
</dbReference>
<dbReference type="GO" id="GO:0005524">
    <property type="term" value="F:ATP binding"/>
    <property type="evidence" value="ECO:0007669"/>
    <property type="project" value="UniProtKB-UniRule"/>
</dbReference>
<dbReference type="GO" id="GO:0000287">
    <property type="term" value="F:magnesium ion binding"/>
    <property type="evidence" value="ECO:0007669"/>
    <property type="project" value="UniProtKB-UniRule"/>
</dbReference>
<dbReference type="GO" id="GO:0004826">
    <property type="term" value="F:phenylalanine-tRNA ligase activity"/>
    <property type="evidence" value="ECO:0007669"/>
    <property type="project" value="UniProtKB-UniRule"/>
</dbReference>
<dbReference type="GO" id="GO:0000049">
    <property type="term" value="F:tRNA binding"/>
    <property type="evidence" value="ECO:0007669"/>
    <property type="project" value="InterPro"/>
</dbReference>
<dbReference type="GO" id="GO:0006432">
    <property type="term" value="P:phenylalanyl-tRNA aminoacylation"/>
    <property type="evidence" value="ECO:0007669"/>
    <property type="project" value="UniProtKB-UniRule"/>
</dbReference>
<dbReference type="CDD" id="cd00496">
    <property type="entry name" value="PheRS_alpha_core"/>
    <property type="match status" value="1"/>
</dbReference>
<dbReference type="Gene3D" id="3.30.930.10">
    <property type="entry name" value="Bira Bifunctional Protein, Domain 2"/>
    <property type="match status" value="1"/>
</dbReference>
<dbReference type="Gene3D" id="1.10.10.10">
    <property type="entry name" value="Winged helix-like DNA-binding domain superfamily/Winged helix DNA-binding domain"/>
    <property type="match status" value="1"/>
</dbReference>
<dbReference type="HAMAP" id="MF_00282">
    <property type="entry name" value="Phe_tRNA_synth_alpha2"/>
    <property type="match status" value="1"/>
</dbReference>
<dbReference type="InterPro" id="IPR006195">
    <property type="entry name" value="aa-tRNA-synth_II"/>
</dbReference>
<dbReference type="InterPro" id="IPR045864">
    <property type="entry name" value="aa-tRNA-synth_II/BPL/LPL"/>
</dbReference>
<dbReference type="InterPro" id="IPR004529">
    <property type="entry name" value="Phe-tRNA-synth_IIc_asu"/>
</dbReference>
<dbReference type="InterPro" id="IPR022917">
    <property type="entry name" value="Phe_tRNA_ligase_alpha_bac/arc"/>
</dbReference>
<dbReference type="InterPro" id="IPR002319">
    <property type="entry name" value="Phenylalanyl-tRNA_Synthase"/>
</dbReference>
<dbReference type="InterPro" id="IPR036388">
    <property type="entry name" value="WH-like_DNA-bd_sf"/>
</dbReference>
<dbReference type="InterPro" id="IPR036390">
    <property type="entry name" value="WH_DNA-bd_sf"/>
</dbReference>
<dbReference type="NCBIfam" id="TIGR00468">
    <property type="entry name" value="pheS"/>
    <property type="match status" value="1"/>
</dbReference>
<dbReference type="NCBIfam" id="NF003210">
    <property type="entry name" value="PRK04172.1"/>
    <property type="match status" value="1"/>
</dbReference>
<dbReference type="PANTHER" id="PTHR11538:SF40">
    <property type="entry name" value="PHENYLALANINE--TRNA LIGASE ALPHA SUBUNIT"/>
    <property type="match status" value="1"/>
</dbReference>
<dbReference type="PANTHER" id="PTHR11538">
    <property type="entry name" value="PHENYLALANYL-TRNA SYNTHETASE"/>
    <property type="match status" value="1"/>
</dbReference>
<dbReference type="Pfam" id="PF01409">
    <property type="entry name" value="tRNA-synt_2d"/>
    <property type="match status" value="1"/>
</dbReference>
<dbReference type="SUPFAM" id="SSF55681">
    <property type="entry name" value="Class II aaRS and biotin synthetases"/>
    <property type="match status" value="1"/>
</dbReference>
<dbReference type="SUPFAM" id="SSF46785">
    <property type="entry name" value="Winged helix' DNA-binding domain"/>
    <property type="match status" value="1"/>
</dbReference>
<dbReference type="PROSITE" id="PS50862">
    <property type="entry name" value="AA_TRNA_LIGASE_II"/>
    <property type="match status" value="1"/>
</dbReference>
<feature type="chain" id="PRO_0000126806" description="Phenylalanine--tRNA ligase alpha subunit">
    <location>
        <begin position="1"/>
        <end position="488"/>
    </location>
</feature>
<feature type="binding site" evidence="1">
    <location>
        <position position="332"/>
    </location>
    <ligand>
        <name>L-phenylalanine</name>
        <dbReference type="ChEBI" id="CHEBI:58095"/>
    </ligand>
</feature>
<feature type="binding site" evidence="1">
    <location>
        <begin position="371"/>
        <end position="373"/>
    </location>
    <ligand>
        <name>L-phenylalanine</name>
        <dbReference type="ChEBI" id="CHEBI:58095"/>
    </ligand>
</feature>
<feature type="binding site" evidence="1">
    <location>
        <position position="410"/>
    </location>
    <ligand>
        <name>L-phenylalanine</name>
        <dbReference type="ChEBI" id="CHEBI:58095"/>
    </ligand>
</feature>
<feature type="binding site" evidence="1">
    <location>
        <position position="412"/>
    </location>
    <ligand>
        <name>Mg(2+)</name>
        <dbReference type="ChEBI" id="CHEBI:18420"/>
        <note>shared with beta subunit</note>
    </ligand>
</feature>
<feature type="binding site" evidence="1">
    <location>
        <position position="435"/>
    </location>
    <ligand>
        <name>L-phenylalanine</name>
        <dbReference type="ChEBI" id="CHEBI:58095"/>
    </ligand>
</feature>
<organism>
    <name type="scientific">Aeropyrum pernix (strain ATCC 700893 / DSM 11879 / JCM 9820 / NBRC 100138 / K1)</name>
    <dbReference type="NCBI Taxonomy" id="272557"/>
    <lineage>
        <taxon>Archaea</taxon>
        <taxon>Thermoproteota</taxon>
        <taxon>Thermoprotei</taxon>
        <taxon>Desulfurococcales</taxon>
        <taxon>Desulfurococcaceae</taxon>
        <taxon>Aeropyrum</taxon>
    </lineage>
</organism>
<keyword id="KW-0030">Aminoacyl-tRNA synthetase</keyword>
<keyword id="KW-0067">ATP-binding</keyword>
<keyword id="KW-0963">Cytoplasm</keyword>
<keyword id="KW-0436">Ligase</keyword>
<keyword id="KW-0460">Magnesium</keyword>
<keyword id="KW-0479">Metal-binding</keyword>
<keyword id="KW-0547">Nucleotide-binding</keyword>
<keyword id="KW-0648">Protein biosynthesis</keyword>
<keyword id="KW-1185">Reference proteome</keyword>
<name>SYFA_AERPE</name>
<evidence type="ECO:0000255" key="1">
    <source>
        <dbReference type="HAMAP-Rule" id="MF_00282"/>
    </source>
</evidence>
<sequence length="488" mass="55084">MEVTLSQGEYRLLKLMAERGFREGTLEEASKILGVDKSSLASLSNLLAEKGVVEVEERVEEHYVLTERGRDALERGLPEEKLVLFLAGRGGEASVEEVRRALGEEAGIALGQAARKGLVVIAGGVVRLAVDQAEALKTITPLKKLLENVASGSKPTVGDELLREALSRGLIRREARRSIVLRLKVNPAEALARARVEAAVLTRDMLKSGEWRRLRFKPYNVKAEPPRVLPARRHFLAEFIERLRDILRELGFREVRGPLVELELFNFDVLFQAQDHPAREIHDSLWIKSPRRGDLSGYSDLVERVASVHERGWKYRWSPEVASRYILRSQTTAVSARILATRPNPPARFFTVGKVFRSDAVGPTRLPEFHQLDGIEGDEGYTFRDLLGRLDEIASMLGLKLKFKPAYFPFTEPSVEGYVKLPNGRWLELFGAGMFRPEVLEAVGVDYPVGAWGFGIERLAMAFYGVSDIRKLYTRNVDEVREMRVRWL</sequence>